<sequence length="280" mass="31781">MPNLKGLKTEILSVKNISRITNAMQLVALAKLRKISKKVIDTHNYVSEVYSLFNDIISQVDKSVFLKDSNFETKKTLWIVINSNLGLCGGYNSNVNKLVLQNLKTNDEIFAIGSKAVSFFRSKKIKIKDQVTNIDINFTNEKAKIISNDLLAMYINREFDEIKIVYTKFINNVTFEPAIIRIFPIVKSELHFTHKQKIIFEPDADQILNNTISIYINAIIYGTVIESQVSEQASRRTAMENATNNGQNLEHELSLKYNRQRQGAITQEISEIVSGANAQS</sequence>
<reference key="1">
    <citation type="journal article" date="2004" name="Genome Res.">
        <title>The genome sequence of Mycoplasma mycoides subsp. mycoides SC type strain PG1T, the causative agent of contagious bovine pleuropneumonia (CBPP).</title>
        <authorList>
            <person name="Westberg J."/>
            <person name="Persson A."/>
            <person name="Holmberg A."/>
            <person name="Goesmann A."/>
            <person name="Lundeberg J."/>
            <person name="Johansson K.-E."/>
            <person name="Pettersson B."/>
            <person name="Uhlen M."/>
        </authorList>
    </citation>
    <scope>NUCLEOTIDE SEQUENCE [LARGE SCALE GENOMIC DNA]</scope>
    <source>
        <strain>CCUG 32753 / NCTC 10114 / PG1</strain>
    </source>
</reference>
<evidence type="ECO:0000255" key="1">
    <source>
        <dbReference type="HAMAP-Rule" id="MF_00815"/>
    </source>
</evidence>
<dbReference type="EMBL" id="BX293980">
    <property type="protein sequence ID" value="CAE77497.1"/>
    <property type="molecule type" value="Genomic_DNA"/>
</dbReference>
<dbReference type="RefSeq" id="NP_975855.1">
    <property type="nucleotide sequence ID" value="NC_005364.2"/>
</dbReference>
<dbReference type="RefSeq" id="WP_011167039.1">
    <property type="nucleotide sequence ID" value="NC_005364.2"/>
</dbReference>
<dbReference type="SMR" id="Q6MS93"/>
<dbReference type="STRING" id="272632.MSC_0886"/>
<dbReference type="KEGG" id="mmy:MSC_0886"/>
<dbReference type="PATRIC" id="fig|272632.4.peg.958"/>
<dbReference type="eggNOG" id="COG0224">
    <property type="taxonomic scope" value="Bacteria"/>
</dbReference>
<dbReference type="HOGENOM" id="CLU_050669_0_1_14"/>
<dbReference type="Proteomes" id="UP000001016">
    <property type="component" value="Chromosome"/>
</dbReference>
<dbReference type="GO" id="GO:0005886">
    <property type="term" value="C:plasma membrane"/>
    <property type="evidence" value="ECO:0007669"/>
    <property type="project" value="UniProtKB-SubCell"/>
</dbReference>
<dbReference type="GO" id="GO:0045259">
    <property type="term" value="C:proton-transporting ATP synthase complex"/>
    <property type="evidence" value="ECO:0007669"/>
    <property type="project" value="UniProtKB-KW"/>
</dbReference>
<dbReference type="GO" id="GO:0005524">
    <property type="term" value="F:ATP binding"/>
    <property type="evidence" value="ECO:0007669"/>
    <property type="project" value="UniProtKB-UniRule"/>
</dbReference>
<dbReference type="GO" id="GO:0046933">
    <property type="term" value="F:proton-transporting ATP synthase activity, rotational mechanism"/>
    <property type="evidence" value="ECO:0007669"/>
    <property type="project" value="UniProtKB-UniRule"/>
</dbReference>
<dbReference type="GO" id="GO:0042777">
    <property type="term" value="P:proton motive force-driven plasma membrane ATP synthesis"/>
    <property type="evidence" value="ECO:0007669"/>
    <property type="project" value="UniProtKB-UniRule"/>
</dbReference>
<dbReference type="CDD" id="cd12151">
    <property type="entry name" value="F1-ATPase_gamma"/>
    <property type="match status" value="1"/>
</dbReference>
<dbReference type="Gene3D" id="3.40.1380.10">
    <property type="match status" value="1"/>
</dbReference>
<dbReference type="Gene3D" id="1.10.287.80">
    <property type="entry name" value="ATP synthase, gamma subunit, helix hairpin domain"/>
    <property type="match status" value="1"/>
</dbReference>
<dbReference type="HAMAP" id="MF_00815">
    <property type="entry name" value="ATP_synth_gamma_bact"/>
    <property type="match status" value="1"/>
</dbReference>
<dbReference type="InterPro" id="IPR035968">
    <property type="entry name" value="ATP_synth_F1_ATPase_gsu"/>
</dbReference>
<dbReference type="InterPro" id="IPR000131">
    <property type="entry name" value="ATP_synth_F1_gsu"/>
</dbReference>
<dbReference type="InterPro" id="IPR023632">
    <property type="entry name" value="ATP_synth_F1_gsu_CS"/>
</dbReference>
<dbReference type="NCBIfam" id="TIGR01146">
    <property type="entry name" value="ATPsyn_F1gamma"/>
    <property type="match status" value="1"/>
</dbReference>
<dbReference type="PANTHER" id="PTHR11693">
    <property type="entry name" value="ATP SYNTHASE GAMMA CHAIN"/>
    <property type="match status" value="1"/>
</dbReference>
<dbReference type="PANTHER" id="PTHR11693:SF22">
    <property type="entry name" value="ATP SYNTHASE SUBUNIT GAMMA, MITOCHONDRIAL"/>
    <property type="match status" value="1"/>
</dbReference>
<dbReference type="Pfam" id="PF00231">
    <property type="entry name" value="ATP-synt"/>
    <property type="match status" value="1"/>
</dbReference>
<dbReference type="PRINTS" id="PR00126">
    <property type="entry name" value="ATPASEGAMMA"/>
</dbReference>
<dbReference type="SUPFAM" id="SSF52943">
    <property type="entry name" value="ATP synthase (F1-ATPase), gamma subunit"/>
    <property type="match status" value="1"/>
</dbReference>
<dbReference type="PROSITE" id="PS00153">
    <property type="entry name" value="ATPASE_GAMMA"/>
    <property type="match status" value="1"/>
</dbReference>
<name>ATPG_MYCMS</name>
<organism>
    <name type="scientific">Mycoplasma mycoides subsp. mycoides SC (strain CCUG 32753 / NCTC 10114 / PG1)</name>
    <dbReference type="NCBI Taxonomy" id="272632"/>
    <lineage>
        <taxon>Bacteria</taxon>
        <taxon>Bacillati</taxon>
        <taxon>Mycoplasmatota</taxon>
        <taxon>Mollicutes</taxon>
        <taxon>Mycoplasmataceae</taxon>
        <taxon>Mycoplasma</taxon>
    </lineage>
</organism>
<keyword id="KW-0066">ATP synthesis</keyword>
<keyword id="KW-1003">Cell membrane</keyword>
<keyword id="KW-0139">CF(1)</keyword>
<keyword id="KW-0375">Hydrogen ion transport</keyword>
<keyword id="KW-0406">Ion transport</keyword>
<keyword id="KW-0472">Membrane</keyword>
<keyword id="KW-1185">Reference proteome</keyword>
<keyword id="KW-0813">Transport</keyword>
<protein>
    <recommendedName>
        <fullName evidence="1">ATP synthase gamma chain</fullName>
    </recommendedName>
    <alternativeName>
        <fullName evidence="1">ATP synthase F1 sector gamma subunit</fullName>
    </alternativeName>
    <alternativeName>
        <fullName evidence="1">F-ATPase gamma subunit</fullName>
    </alternativeName>
</protein>
<proteinExistence type="inferred from homology"/>
<comment type="function">
    <text evidence="1">Produces ATP from ADP in the presence of a proton gradient across the membrane. The gamma chain is believed to be important in regulating ATPase activity and the flow of protons through the CF(0) complex.</text>
</comment>
<comment type="subunit">
    <text evidence="1">F-type ATPases have 2 components, CF(1) - the catalytic core - and CF(0) - the membrane proton channel. CF(1) has five subunits: alpha(3), beta(3), gamma(1), delta(1), epsilon(1). CF(0) has three main subunits: a, b and c.</text>
</comment>
<comment type="subcellular location">
    <subcellularLocation>
        <location evidence="1">Cell membrane</location>
        <topology evidence="1">Peripheral membrane protein</topology>
    </subcellularLocation>
</comment>
<comment type="similarity">
    <text evidence="1">Belongs to the ATPase gamma chain family.</text>
</comment>
<gene>
    <name evidence="1" type="primary">atpG</name>
    <name type="ordered locus">MSC_0886</name>
</gene>
<feature type="chain" id="PRO_0000073322" description="ATP synthase gamma chain">
    <location>
        <begin position="1"/>
        <end position="280"/>
    </location>
</feature>
<accession>Q6MS93</accession>